<protein>
    <recommendedName>
        <fullName evidence="1">Large ribosomal subunit protein bL12</fullName>
    </recommendedName>
    <alternativeName>
        <fullName evidence="3">50S ribosomal protein L7/L12</fullName>
    </alternativeName>
</protein>
<comment type="function">
    <text evidence="1">Forms part of the ribosomal stalk which helps the ribosome interact with GTP-bound translation factors. Is thus essential for accurate translation.</text>
</comment>
<comment type="subunit">
    <text evidence="1">Homodimer. Part of the ribosomal stalk of the 50S ribosomal subunit. Forms a multimeric L10(L12)X complex, where L10 forms an elongated spine to which 2 to 4 L12 dimers bind in a sequential fashion. Binds GTP-bound translation factors.</text>
</comment>
<comment type="similarity">
    <text evidence="1">Belongs to the bacterial ribosomal protein bL12 family.</text>
</comment>
<gene>
    <name evidence="1" type="primary">rplL</name>
    <name type="ordered locus">Dvul_0440</name>
</gene>
<organism>
    <name type="scientific">Nitratidesulfovibrio vulgaris (strain DP4)</name>
    <name type="common">Desulfovibrio vulgaris</name>
    <dbReference type="NCBI Taxonomy" id="391774"/>
    <lineage>
        <taxon>Bacteria</taxon>
        <taxon>Pseudomonadati</taxon>
        <taxon>Thermodesulfobacteriota</taxon>
        <taxon>Desulfovibrionia</taxon>
        <taxon>Desulfovibrionales</taxon>
        <taxon>Desulfovibrionaceae</taxon>
        <taxon>Nitratidesulfovibrio</taxon>
    </lineage>
</organism>
<dbReference type="EMBL" id="CP000527">
    <property type="protein sequence ID" value="ABM27463.1"/>
    <property type="molecule type" value="Genomic_DNA"/>
</dbReference>
<dbReference type="RefSeq" id="WP_010940187.1">
    <property type="nucleotide sequence ID" value="NC_008751.1"/>
</dbReference>
<dbReference type="SMR" id="A1VAJ7"/>
<dbReference type="KEGG" id="dvl:Dvul_0440"/>
<dbReference type="HOGENOM" id="CLU_086499_3_0_7"/>
<dbReference type="Proteomes" id="UP000009173">
    <property type="component" value="Chromosome"/>
</dbReference>
<dbReference type="GO" id="GO:0022625">
    <property type="term" value="C:cytosolic large ribosomal subunit"/>
    <property type="evidence" value="ECO:0007669"/>
    <property type="project" value="TreeGrafter"/>
</dbReference>
<dbReference type="GO" id="GO:0003729">
    <property type="term" value="F:mRNA binding"/>
    <property type="evidence" value="ECO:0007669"/>
    <property type="project" value="TreeGrafter"/>
</dbReference>
<dbReference type="GO" id="GO:0003735">
    <property type="term" value="F:structural constituent of ribosome"/>
    <property type="evidence" value="ECO:0007669"/>
    <property type="project" value="InterPro"/>
</dbReference>
<dbReference type="GO" id="GO:0006412">
    <property type="term" value="P:translation"/>
    <property type="evidence" value="ECO:0007669"/>
    <property type="project" value="UniProtKB-UniRule"/>
</dbReference>
<dbReference type="CDD" id="cd00387">
    <property type="entry name" value="Ribosomal_L7_L12"/>
    <property type="match status" value="1"/>
</dbReference>
<dbReference type="FunFam" id="3.30.1390.10:FF:000001">
    <property type="entry name" value="50S ribosomal protein L7/L12"/>
    <property type="match status" value="1"/>
</dbReference>
<dbReference type="Gene3D" id="3.30.1390.10">
    <property type="match status" value="1"/>
</dbReference>
<dbReference type="Gene3D" id="1.20.5.710">
    <property type="entry name" value="Single helix bin"/>
    <property type="match status" value="1"/>
</dbReference>
<dbReference type="HAMAP" id="MF_00368">
    <property type="entry name" value="Ribosomal_bL12"/>
    <property type="match status" value="1"/>
</dbReference>
<dbReference type="InterPro" id="IPR000206">
    <property type="entry name" value="Ribosomal_bL12"/>
</dbReference>
<dbReference type="InterPro" id="IPR013823">
    <property type="entry name" value="Ribosomal_bL12_C"/>
</dbReference>
<dbReference type="InterPro" id="IPR014719">
    <property type="entry name" value="Ribosomal_bL12_C/ClpS-like"/>
</dbReference>
<dbReference type="InterPro" id="IPR008932">
    <property type="entry name" value="Ribosomal_bL12_oligo"/>
</dbReference>
<dbReference type="InterPro" id="IPR036235">
    <property type="entry name" value="Ribosomal_bL12_oligo_N_sf"/>
</dbReference>
<dbReference type="NCBIfam" id="TIGR00855">
    <property type="entry name" value="L12"/>
    <property type="match status" value="1"/>
</dbReference>
<dbReference type="PANTHER" id="PTHR45987">
    <property type="entry name" value="39S RIBOSOMAL PROTEIN L12"/>
    <property type="match status" value="1"/>
</dbReference>
<dbReference type="PANTHER" id="PTHR45987:SF4">
    <property type="entry name" value="LARGE RIBOSOMAL SUBUNIT PROTEIN BL12M"/>
    <property type="match status" value="1"/>
</dbReference>
<dbReference type="Pfam" id="PF00542">
    <property type="entry name" value="Ribosomal_L12"/>
    <property type="match status" value="1"/>
</dbReference>
<dbReference type="Pfam" id="PF16320">
    <property type="entry name" value="Ribosomal_L12_N"/>
    <property type="match status" value="1"/>
</dbReference>
<dbReference type="SUPFAM" id="SSF54736">
    <property type="entry name" value="ClpS-like"/>
    <property type="match status" value="1"/>
</dbReference>
<dbReference type="SUPFAM" id="SSF48300">
    <property type="entry name" value="Ribosomal protein L7/12, oligomerisation (N-terminal) domain"/>
    <property type="match status" value="1"/>
</dbReference>
<proteinExistence type="inferred from homology"/>
<accession>A1VAJ7</accession>
<feature type="chain" id="PRO_1000006999" description="Large ribosomal subunit protein bL12">
    <location>
        <begin position="1"/>
        <end position="127"/>
    </location>
</feature>
<feature type="region of interest" description="Disordered" evidence="2">
    <location>
        <begin position="94"/>
        <end position="114"/>
    </location>
</feature>
<feature type="compositionally biased region" description="Basic and acidic residues" evidence="2">
    <location>
        <begin position="104"/>
        <end position="114"/>
    </location>
</feature>
<keyword id="KW-0687">Ribonucleoprotein</keyword>
<keyword id="KW-0689">Ribosomal protein</keyword>
<name>RL7_NITV4</name>
<evidence type="ECO:0000255" key="1">
    <source>
        <dbReference type="HAMAP-Rule" id="MF_00368"/>
    </source>
</evidence>
<evidence type="ECO:0000256" key="2">
    <source>
        <dbReference type="SAM" id="MobiDB-lite"/>
    </source>
</evidence>
<evidence type="ECO:0000305" key="3"/>
<sequence>MSITKEQVVEFIGNMTVLELSEFIKELEEKFGVSAAAPMAAMAVAAPAGDAAPAEEEKTEFDIILKSAGANKIGVIKVVRALTGLGLKEAKDKVDGAPSTLKEAASKEEAEEAKKQLVEAGAEVEIK</sequence>
<reference key="1">
    <citation type="journal article" date="2009" name="Environ. Microbiol.">
        <title>Contribution of mobile genetic elements to Desulfovibrio vulgaris genome plasticity.</title>
        <authorList>
            <person name="Walker C.B."/>
            <person name="Stolyar S."/>
            <person name="Chivian D."/>
            <person name="Pinel N."/>
            <person name="Gabster J.A."/>
            <person name="Dehal P.S."/>
            <person name="He Z."/>
            <person name="Yang Z.K."/>
            <person name="Yen H.C."/>
            <person name="Zhou J."/>
            <person name="Wall J.D."/>
            <person name="Hazen T.C."/>
            <person name="Arkin A.P."/>
            <person name="Stahl D.A."/>
        </authorList>
    </citation>
    <scope>NUCLEOTIDE SEQUENCE [LARGE SCALE GENOMIC DNA]</scope>
    <source>
        <strain>DP4</strain>
    </source>
</reference>